<feature type="chain" id="PRO_0000107120" description="Uncharacterized protein MJ0956">
    <location>
        <begin position="1"/>
        <end position="260"/>
    </location>
</feature>
<gene>
    <name type="ordered locus">MJ0956</name>
</gene>
<reference key="1">
    <citation type="journal article" date="1996" name="Science">
        <title>Complete genome sequence of the methanogenic archaeon, Methanococcus jannaschii.</title>
        <authorList>
            <person name="Bult C.J."/>
            <person name="White O."/>
            <person name="Olsen G.J."/>
            <person name="Zhou L."/>
            <person name="Fleischmann R.D."/>
            <person name="Sutton G.G."/>
            <person name="Blake J.A."/>
            <person name="FitzGerald L.M."/>
            <person name="Clayton R.A."/>
            <person name="Gocayne J.D."/>
            <person name="Kerlavage A.R."/>
            <person name="Dougherty B.A."/>
            <person name="Tomb J.-F."/>
            <person name="Adams M.D."/>
            <person name="Reich C.I."/>
            <person name="Overbeek R."/>
            <person name="Kirkness E.F."/>
            <person name="Weinstock K.G."/>
            <person name="Merrick J.M."/>
            <person name="Glodek A."/>
            <person name="Scott J.L."/>
            <person name="Geoghagen N.S.M."/>
            <person name="Weidman J.F."/>
            <person name="Fuhrmann J.L."/>
            <person name="Nguyen D."/>
            <person name="Utterback T.R."/>
            <person name="Kelley J.M."/>
            <person name="Peterson J.D."/>
            <person name="Sadow P.W."/>
            <person name="Hanna M.C."/>
            <person name="Cotton M.D."/>
            <person name="Roberts K.M."/>
            <person name="Hurst M.A."/>
            <person name="Kaine B.P."/>
            <person name="Borodovsky M."/>
            <person name="Klenk H.-P."/>
            <person name="Fraser C.M."/>
            <person name="Smith H.O."/>
            <person name="Woese C.R."/>
            <person name="Venter J.C."/>
        </authorList>
    </citation>
    <scope>NUCLEOTIDE SEQUENCE [LARGE SCALE GENOMIC DNA]</scope>
    <source>
        <strain>ATCC 43067 / DSM 2661 / JAL-1 / JCM 10045 / NBRC 100440</strain>
    </source>
</reference>
<keyword id="KW-1185">Reference proteome</keyword>
<protein>
    <recommendedName>
        <fullName>Uncharacterized protein MJ0956</fullName>
    </recommendedName>
</protein>
<sequence length="260" mass="30867">MHEDVWSLIKETNHKTILYSHGMKNRVLLGYLLKLRGKYNFDFEAVTFISDRSPKWVREEIKWIMKANDVKHRFIECGKCKISLENNGHDYHGSCVVWEGIKNFEGGVVASSIGEHIKDKERFLTWCNDYNLFPPFIHLNVSRERLVKEFESLDKNLISSCYHACVFCPILYKLGKSLIKSEIFYKKKILTDNERKEHALNEFYDAMKEQDIGRMINSVKIYYNKYIRELDEPYADYIKSRDVEMFDKLVNKCKEYLGVK</sequence>
<dbReference type="EMBL" id="L77117">
    <property type="protein sequence ID" value="AAB98969.1"/>
    <property type="molecule type" value="Genomic_DNA"/>
</dbReference>
<dbReference type="PIR" id="D64419">
    <property type="entry name" value="D64419"/>
</dbReference>
<dbReference type="RefSeq" id="WP_010870470.1">
    <property type="nucleotide sequence ID" value="NC_000909.1"/>
</dbReference>
<dbReference type="STRING" id="243232.MJ_0956"/>
<dbReference type="PaxDb" id="243232-MJ_0956"/>
<dbReference type="EnsemblBacteria" id="AAB98969">
    <property type="protein sequence ID" value="AAB98969"/>
    <property type="gene ID" value="MJ_0956"/>
</dbReference>
<dbReference type="GeneID" id="1451854"/>
<dbReference type="KEGG" id="mja:MJ_0956"/>
<dbReference type="eggNOG" id="arCOG00043">
    <property type="taxonomic scope" value="Archaea"/>
</dbReference>
<dbReference type="HOGENOM" id="CLU_1067976_0_0_2"/>
<dbReference type="InParanoid" id="Q58366"/>
<dbReference type="OrthoDB" id="65335at2157"/>
<dbReference type="Proteomes" id="UP000000805">
    <property type="component" value="Chromosome"/>
</dbReference>
<proteinExistence type="predicted"/>
<accession>Q58366</accession>
<name>Y956_METJA</name>
<organism>
    <name type="scientific">Methanocaldococcus jannaschii (strain ATCC 43067 / DSM 2661 / JAL-1 / JCM 10045 / NBRC 100440)</name>
    <name type="common">Methanococcus jannaschii</name>
    <dbReference type="NCBI Taxonomy" id="243232"/>
    <lineage>
        <taxon>Archaea</taxon>
        <taxon>Methanobacteriati</taxon>
        <taxon>Methanobacteriota</taxon>
        <taxon>Methanomada group</taxon>
        <taxon>Methanococci</taxon>
        <taxon>Methanococcales</taxon>
        <taxon>Methanocaldococcaceae</taxon>
        <taxon>Methanocaldococcus</taxon>
    </lineage>
</organism>